<comment type="function">
    <text evidence="1">Probably deamidates glutamine residues to glutamate on methyl-accepting chemotaxis receptors (MCPs), playing an important role in chemotaxis.</text>
</comment>
<comment type="catalytic activity">
    <reaction evidence="1">
        <text>L-glutaminyl-[protein] + H2O = L-glutamyl-[protein] + NH4(+)</text>
        <dbReference type="Rhea" id="RHEA:16441"/>
        <dbReference type="Rhea" id="RHEA-COMP:10207"/>
        <dbReference type="Rhea" id="RHEA-COMP:10208"/>
        <dbReference type="ChEBI" id="CHEBI:15377"/>
        <dbReference type="ChEBI" id="CHEBI:28938"/>
        <dbReference type="ChEBI" id="CHEBI:29973"/>
        <dbReference type="ChEBI" id="CHEBI:30011"/>
        <dbReference type="EC" id="3.5.1.44"/>
    </reaction>
</comment>
<comment type="similarity">
    <text evidence="1">Belongs to the CheD family.</text>
</comment>
<name>CHED_DESHD</name>
<sequence length="160" mass="16688">MSNVISVGMADLKTTKAPNILMTAGLGSCIGICVHDPIQKVGGMAHIMLPTAGSAPGGNPAKYADTAMDLLVTEILRLGASKSRLRAKMAGGAQMFSFPGKPPVLKIGDRNAEQVIVELKRLGIPLLVSDVGGSFGRTIHFDVGTGDLKVRTINHGEKVI</sequence>
<protein>
    <recommendedName>
        <fullName evidence="1">Probable chemoreceptor glutamine deamidase CheD</fullName>
        <ecNumber evidence="1">3.5.1.44</ecNumber>
    </recommendedName>
</protein>
<organism>
    <name type="scientific">Desulfitobacterium hafniense (strain DSM 10664 / DCB-2)</name>
    <dbReference type="NCBI Taxonomy" id="272564"/>
    <lineage>
        <taxon>Bacteria</taxon>
        <taxon>Bacillati</taxon>
        <taxon>Bacillota</taxon>
        <taxon>Clostridia</taxon>
        <taxon>Eubacteriales</taxon>
        <taxon>Desulfitobacteriaceae</taxon>
        <taxon>Desulfitobacterium</taxon>
    </lineage>
</organism>
<feature type="chain" id="PRO_1000184925" description="Probable chemoreceptor glutamine deamidase CheD">
    <location>
        <begin position="1"/>
        <end position="160"/>
    </location>
</feature>
<dbReference type="EC" id="3.5.1.44" evidence="1"/>
<dbReference type="EMBL" id="CP001336">
    <property type="protein sequence ID" value="ACL22138.1"/>
    <property type="molecule type" value="Genomic_DNA"/>
</dbReference>
<dbReference type="RefSeq" id="WP_005816201.1">
    <property type="nucleotide sequence ID" value="NC_011830.1"/>
</dbReference>
<dbReference type="SMR" id="B8FTP6"/>
<dbReference type="KEGG" id="dhd:Dhaf_4129"/>
<dbReference type="HOGENOM" id="CLU_087854_2_0_9"/>
<dbReference type="Proteomes" id="UP000007726">
    <property type="component" value="Chromosome"/>
</dbReference>
<dbReference type="GO" id="GO:0050568">
    <property type="term" value="F:protein-glutamine glutaminase activity"/>
    <property type="evidence" value="ECO:0007669"/>
    <property type="project" value="UniProtKB-UniRule"/>
</dbReference>
<dbReference type="GO" id="GO:0006935">
    <property type="term" value="P:chemotaxis"/>
    <property type="evidence" value="ECO:0007669"/>
    <property type="project" value="UniProtKB-UniRule"/>
</dbReference>
<dbReference type="CDD" id="cd16352">
    <property type="entry name" value="CheD"/>
    <property type="match status" value="1"/>
</dbReference>
<dbReference type="Gene3D" id="3.30.1330.200">
    <property type="match status" value="1"/>
</dbReference>
<dbReference type="HAMAP" id="MF_01440">
    <property type="entry name" value="CheD"/>
    <property type="match status" value="1"/>
</dbReference>
<dbReference type="InterPro" id="IPR038592">
    <property type="entry name" value="CheD-like_sf"/>
</dbReference>
<dbReference type="InterPro" id="IPR005659">
    <property type="entry name" value="Chemorcpt_Glu_NH3ase_CheD"/>
</dbReference>
<dbReference type="InterPro" id="IPR011324">
    <property type="entry name" value="Cytotoxic_necrot_fac-like_cat"/>
</dbReference>
<dbReference type="PANTHER" id="PTHR35147">
    <property type="entry name" value="CHEMORECEPTOR GLUTAMINE DEAMIDASE CHED-RELATED"/>
    <property type="match status" value="1"/>
</dbReference>
<dbReference type="PANTHER" id="PTHR35147:SF1">
    <property type="entry name" value="CHEMORECEPTOR GLUTAMINE DEAMIDASE CHED-RELATED"/>
    <property type="match status" value="1"/>
</dbReference>
<dbReference type="Pfam" id="PF03975">
    <property type="entry name" value="CheD"/>
    <property type="match status" value="1"/>
</dbReference>
<dbReference type="SUPFAM" id="SSF64438">
    <property type="entry name" value="CNF1/YfiH-like putative cysteine hydrolases"/>
    <property type="match status" value="1"/>
</dbReference>
<gene>
    <name evidence="1" type="primary">cheD</name>
    <name type="ordered locus">Dhaf_4129</name>
</gene>
<accession>B8FTP6</accession>
<keyword id="KW-0145">Chemotaxis</keyword>
<keyword id="KW-0378">Hydrolase</keyword>
<proteinExistence type="inferred from homology"/>
<evidence type="ECO:0000255" key="1">
    <source>
        <dbReference type="HAMAP-Rule" id="MF_01440"/>
    </source>
</evidence>
<reference key="1">
    <citation type="journal article" date="2012" name="BMC Microbiol.">
        <title>Genome sequence of Desulfitobacterium hafniense DCB-2, a Gram-positive anaerobe capable of dehalogenation and metal reduction.</title>
        <authorList>
            <person name="Kim S.H."/>
            <person name="Harzman C."/>
            <person name="Davis J.K."/>
            <person name="Hutcheson R."/>
            <person name="Broderick J.B."/>
            <person name="Marsh T.L."/>
            <person name="Tiedje J.M."/>
        </authorList>
    </citation>
    <scope>NUCLEOTIDE SEQUENCE [LARGE SCALE GENOMIC DNA]</scope>
    <source>
        <strain>DSM 10664 / DCB-2</strain>
    </source>
</reference>